<comment type="function">
    <text evidence="1">Catalyzes the ATP- as well as the pyrophosphate-dependent phosphorylation of a specific serine residue in HPr, a phosphocarrier protein of the phosphoenolpyruvate-dependent sugar phosphotransferase system (PTS). HprK/P also catalyzes the pyrophosphate-producing, inorganic phosphate-dependent dephosphorylation (phosphorolysis) of seryl-phosphorylated HPr (P-Ser-HPr).</text>
</comment>
<comment type="catalytic activity">
    <reaction evidence="1">
        <text>[HPr protein]-L-serine + ATP = [HPr protein]-O-phospho-L-serine + ADP + H(+)</text>
        <dbReference type="Rhea" id="RHEA:46600"/>
        <dbReference type="Rhea" id="RHEA-COMP:11602"/>
        <dbReference type="Rhea" id="RHEA-COMP:11603"/>
        <dbReference type="ChEBI" id="CHEBI:15378"/>
        <dbReference type="ChEBI" id="CHEBI:29999"/>
        <dbReference type="ChEBI" id="CHEBI:30616"/>
        <dbReference type="ChEBI" id="CHEBI:83421"/>
        <dbReference type="ChEBI" id="CHEBI:456216"/>
    </reaction>
</comment>
<comment type="catalytic activity">
    <reaction evidence="1">
        <text>[HPr protein]-O-phospho-L-serine + phosphate + H(+) = [HPr protein]-L-serine + diphosphate</text>
        <dbReference type="Rhea" id="RHEA:46604"/>
        <dbReference type="Rhea" id="RHEA-COMP:11602"/>
        <dbReference type="Rhea" id="RHEA-COMP:11603"/>
        <dbReference type="ChEBI" id="CHEBI:15378"/>
        <dbReference type="ChEBI" id="CHEBI:29999"/>
        <dbReference type="ChEBI" id="CHEBI:33019"/>
        <dbReference type="ChEBI" id="CHEBI:43474"/>
        <dbReference type="ChEBI" id="CHEBI:83421"/>
    </reaction>
</comment>
<comment type="cofactor">
    <cofactor evidence="1">
        <name>Mg(2+)</name>
        <dbReference type="ChEBI" id="CHEBI:18420"/>
    </cofactor>
</comment>
<comment type="subunit">
    <text evidence="1">Homohexamer.</text>
</comment>
<comment type="domain">
    <text evidence="1">The Walker A ATP-binding motif also binds Pi and PPi.</text>
</comment>
<comment type="miscellaneous">
    <text evidence="1">Both phosphorylation and phosphorolysis are carried out by the same active site and suggest a common mechanism for both reactions.</text>
</comment>
<comment type="similarity">
    <text evidence="1">Belongs to the HPrK/P family.</text>
</comment>
<organism>
    <name type="scientific">Chlorobium luteolum (strain DSM 273 / BCRC 81028 / 2530)</name>
    <name type="common">Pelodictyon luteolum</name>
    <dbReference type="NCBI Taxonomy" id="319225"/>
    <lineage>
        <taxon>Bacteria</taxon>
        <taxon>Pseudomonadati</taxon>
        <taxon>Chlorobiota</taxon>
        <taxon>Chlorobiia</taxon>
        <taxon>Chlorobiales</taxon>
        <taxon>Chlorobiaceae</taxon>
        <taxon>Chlorobium/Pelodictyon group</taxon>
        <taxon>Pelodictyon</taxon>
    </lineage>
</organism>
<gene>
    <name evidence="1" type="primary">hprK</name>
    <name type="ordered locus">Plut_1622</name>
</gene>
<accession>Q3B2F5</accession>
<proteinExistence type="inferred from homology"/>
<protein>
    <recommendedName>
        <fullName evidence="1">HPr kinase/phosphorylase</fullName>
        <shortName evidence="1">HPrK/P</shortName>
        <ecNumber evidence="1">2.7.11.-</ecNumber>
        <ecNumber evidence="1">2.7.4.-</ecNumber>
    </recommendedName>
    <alternativeName>
        <fullName evidence="1">HPr(Ser) kinase/phosphorylase</fullName>
    </alternativeName>
</protein>
<name>HPRK_CHLL3</name>
<feature type="chain" id="PRO_1000067164" description="HPr kinase/phosphorylase">
    <location>
        <begin position="1"/>
        <end position="332"/>
    </location>
</feature>
<feature type="region of interest" description="Important for the catalytic mechanism of both phosphorylation and dephosphorylation" evidence="1">
    <location>
        <begin position="217"/>
        <end position="226"/>
    </location>
</feature>
<feature type="region of interest" description="Important for the catalytic mechanism of dephosphorylation" evidence="1">
    <location>
        <begin position="280"/>
        <end position="285"/>
    </location>
</feature>
<feature type="active site" evidence="1">
    <location>
        <position position="153"/>
    </location>
</feature>
<feature type="active site" evidence="1">
    <location>
        <position position="174"/>
    </location>
</feature>
<feature type="active site" description="Proton acceptor; for phosphorylation activity. Proton donor; for dephosphorylation activity" evidence="1">
    <location>
        <position position="192"/>
    </location>
</feature>
<feature type="active site" evidence="1">
    <location>
        <position position="259"/>
    </location>
</feature>
<feature type="binding site" evidence="1">
    <location>
        <begin position="168"/>
        <end position="175"/>
    </location>
    <ligand>
        <name>ATP</name>
        <dbReference type="ChEBI" id="CHEBI:30616"/>
    </ligand>
</feature>
<feature type="binding site" evidence="1">
    <location>
        <position position="175"/>
    </location>
    <ligand>
        <name>Mg(2+)</name>
        <dbReference type="ChEBI" id="CHEBI:18420"/>
    </ligand>
</feature>
<feature type="binding site" evidence="1">
    <location>
        <position position="218"/>
    </location>
    <ligand>
        <name>Mg(2+)</name>
        <dbReference type="ChEBI" id="CHEBI:18420"/>
    </ligand>
</feature>
<keyword id="KW-0067">ATP-binding</keyword>
<keyword id="KW-0418">Kinase</keyword>
<keyword id="KW-0460">Magnesium</keyword>
<keyword id="KW-0479">Metal-binding</keyword>
<keyword id="KW-0511">Multifunctional enzyme</keyword>
<keyword id="KW-0547">Nucleotide-binding</keyword>
<keyword id="KW-1185">Reference proteome</keyword>
<keyword id="KW-0723">Serine/threonine-protein kinase</keyword>
<keyword id="KW-0808">Transferase</keyword>
<dbReference type="EC" id="2.7.11.-" evidence="1"/>
<dbReference type="EC" id="2.7.4.-" evidence="1"/>
<dbReference type="EMBL" id="CP000096">
    <property type="protein sequence ID" value="ABB24476.1"/>
    <property type="molecule type" value="Genomic_DNA"/>
</dbReference>
<dbReference type="RefSeq" id="WP_011358348.1">
    <property type="nucleotide sequence ID" value="NC_007512.1"/>
</dbReference>
<dbReference type="SMR" id="Q3B2F5"/>
<dbReference type="STRING" id="319225.Plut_1622"/>
<dbReference type="KEGG" id="plt:Plut_1622"/>
<dbReference type="eggNOG" id="COG1493">
    <property type="taxonomic scope" value="Bacteria"/>
</dbReference>
<dbReference type="HOGENOM" id="CLU_052030_0_1_10"/>
<dbReference type="OrthoDB" id="9778803at2"/>
<dbReference type="Proteomes" id="UP000002709">
    <property type="component" value="Chromosome"/>
</dbReference>
<dbReference type="GO" id="GO:0005524">
    <property type="term" value="F:ATP binding"/>
    <property type="evidence" value="ECO:0007669"/>
    <property type="project" value="UniProtKB-UniRule"/>
</dbReference>
<dbReference type="GO" id="GO:0000287">
    <property type="term" value="F:magnesium ion binding"/>
    <property type="evidence" value="ECO:0007669"/>
    <property type="project" value="UniProtKB-UniRule"/>
</dbReference>
<dbReference type="GO" id="GO:0000155">
    <property type="term" value="F:phosphorelay sensor kinase activity"/>
    <property type="evidence" value="ECO:0007669"/>
    <property type="project" value="InterPro"/>
</dbReference>
<dbReference type="GO" id="GO:0004674">
    <property type="term" value="F:protein serine/threonine kinase activity"/>
    <property type="evidence" value="ECO:0007669"/>
    <property type="project" value="UniProtKB-KW"/>
</dbReference>
<dbReference type="GO" id="GO:0004712">
    <property type="term" value="F:protein serine/threonine/tyrosine kinase activity"/>
    <property type="evidence" value="ECO:0007669"/>
    <property type="project" value="UniProtKB-UniRule"/>
</dbReference>
<dbReference type="GO" id="GO:0006109">
    <property type="term" value="P:regulation of carbohydrate metabolic process"/>
    <property type="evidence" value="ECO:0007669"/>
    <property type="project" value="UniProtKB-UniRule"/>
</dbReference>
<dbReference type="CDD" id="cd01918">
    <property type="entry name" value="HprK_C"/>
    <property type="match status" value="1"/>
</dbReference>
<dbReference type="Gene3D" id="3.40.1390.20">
    <property type="entry name" value="HprK N-terminal domain-like"/>
    <property type="match status" value="1"/>
</dbReference>
<dbReference type="Gene3D" id="3.40.50.300">
    <property type="entry name" value="P-loop containing nucleotide triphosphate hydrolases"/>
    <property type="match status" value="1"/>
</dbReference>
<dbReference type="HAMAP" id="MF_01249">
    <property type="entry name" value="HPr_kinase"/>
    <property type="match status" value="1"/>
</dbReference>
<dbReference type="InterPro" id="IPR003755">
    <property type="entry name" value="HPr(Ser)_kin/Pase"/>
</dbReference>
<dbReference type="InterPro" id="IPR011104">
    <property type="entry name" value="Hpr_kin/Pase_C"/>
</dbReference>
<dbReference type="InterPro" id="IPR011126">
    <property type="entry name" value="Hpr_kin/Pase_Hpr_N"/>
</dbReference>
<dbReference type="InterPro" id="IPR027417">
    <property type="entry name" value="P-loop_NTPase"/>
</dbReference>
<dbReference type="InterPro" id="IPR028979">
    <property type="entry name" value="Ser_kin/Pase_Hpr-like_N_sf"/>
</dbReference>
<dbReference type="NCBIfam" id="TIGR00679">
    <property type="entry name" value="hpr-ser"/>
    <property type="match status" value="1"/>
</dbReference>
<dbReference type="PANTHER" id="PTHR30305:SF1">
    <property type="entry name" value="HPR KINASE_PHOSPHORYLASE"/>
    <property type="match status" value="1"/>
</dbReference>
<dbReference type="PANTHER" id="PTHR30305">
    <property type="entry name" value="PROTEIN YJDM-RELATED"/>
    <property type="match status" value="1"/>
</dbReference>
<dbReference type="Pfam" id="PF07475">
    <property type="entry name" value="Hpr_kinase_C"/>
    <property type="match status" value="1"/>
</dbReference>
<dbReference type="Pfam" id="PF02603">
    <property type="entry name" value="Hpr_kinase_N"/>
    <property type="match status" value="1"/>
</dbReference>
<dbReference type="SUPFAM" id="SSF75138">
    <property type="entry name" value="HprK N-terminal domain-like"/>
    <property type="match status" value="1"/>
</dbReference>
<dbReference type="SUPFAM" id="SSF53795">
    <property type="entry name" value="PEP carboxykinase-like"/>
    <property type="match status" value="1"/>
</dbReference>
<evidence type="ECO:0000255" key="1">
    <source>
        <dbReference type="HAMAP-Rule" id="MF_01249"/>
    </source>
</evidence>
<reference key="1">
    <citation type="submission" date="2005-08" db="EMBL/GenBank/DDBJ databases">
        <title>Complete sequence of Pelodictyon luteolum DSM 273.</title>
        <authorList>
            <consortium name="US DOE Joint Genome Institute"/>
            <person name="Copeland A."/>
            <person name="Lucas S."/>
            <person name="Lapidus A."/>
            <person name="Barry K."/>
            <person name="Detter J.C."/>
            <person name="Glavina T."/>
            <person name="Hammon N."/>
            <person name="Israni S."/>
            <person name="Pitluck S."/>
            <person name="Bryant D."/>
            <person name="Schmutz J."/>
            <person name="Larimer F."/>
            <person name="Land M."/>
            <person name="Kyrpides N."/>
            <person name="Ivanova N."/>
            <person name="Richardson P."/>
        </authorList>
    </citation>
    <scope>NUCLEOTIDE SEQUENCE [LARGE SCALE GENOMIC DNA]</scope>
    <source>
        <strain>DSM 273 / BCRC 81028 / 2530</strain>
    </source>
</reference>
<sequence>MTLDQKGLKKRSVTVAYFFNNIGKKHDIRLRRMNTVDEQERRIFERDLHRPGLALAGFTNLFTYKRLQILGNTETRFLNHLGEEERKAAFANLTRFKVPCIILTSNNKLQPELLDMATAAGIPVYVTRQSSTKAIYLVTDFLDDQFSLYQQYHGSMVDVYGVGVLLTGKSGLGKSEIALDLVERGHGLVADDVVVIRRKGETMQLSASRNNIIDHFMEIRGLGVVDVKANFGIRAIRDVKEVLVVVELLEWNKEMEYERLGLDTKTIRILGVDVPLVQLPIFPGKNITVIIEVVALNFLLKRYSNYVAAEALTDRIKKVIHNDDRTAGDILV</sequence>